<feature type="chain" id="PRO_0000116110" description="DNA primase">
    <location>
        <begin position="1"/>
        <end position="861"/>
    </location>
</feature>
<feature type="zinc finger region" description="CHC2-type" evidence="1">
    <location>
        <begin position="805"/>
        <end position="843"/>
    </location>
</feature>
<feature type="site" description="Essential for primase activity" evidence="1">
    <location>
        <position position="492"/>
    </location>
</feature>
<feature type="site" description="Essential for primase activity" evidence="1">
    <location>
        <position position="494"/>
    </location>
</feature>
<dbReference type="EC" id="2.7.7.-" evidence="1"/>
<dbReference type="EMBL" id="U43400">
    <property type="protein sequence ID" value="AAC54705.1"/>
    <property type="molecule type" value="Genomic_DNA"/>
</dbReference>
<dbReference type="PIR" id="T41945">
    <property type="entry name" value="T41945"/>
</dbReference>
<dbReference type="RefSeq" id="YP_073783.1">
    <property type="nucleotide sequence ID" value="NC_001716.2"/>
</dbReference>
<dbReference type="GeneID" id="3289501"/>
<dbReference type="KEGG" id="vg:3289501"/>
<dbReference type="Proteomes" id="UP000009246">
    <property type="component" value="Segment"/>
</dbReference>
<dbReference type="GO" id="GO:0042025">
    <property type="term" value="C:host cell nucleus"/>
    <property type="evidence" value="ECO:0007669"/>
    <property type="project" value="UniProtKB-SubCell"/>
</dbReference>
<dbReference type="GO" id="GO:0003899">
    <property type="term" value="F:DNA-directed RNA polymerase activity"/>
    <property type="evidence" value="ECO:0007669"/>
    <property type="project" value="InterPro"/>
</dbReference>
<dbReference type="GO" id="GO:0008270">
    <property type="term" value="F:zinc ion binding"/>
    <property type="evidence" value="ECO:0007669"/>
    <property type="project" value="UniProtKB-KW"/>
</dbReference>
<dbReference type="GO" id="GO:0039686">
    <property type="term" value="P:bidirectional double-stranded viral DNA replication"/>
    <property type="evidence" value="ECO:0007669"/>
    <property type="project" value="InterPro"/>
</dbReference>
<dbReference type="GO" id="GO:0006260">
    <property type="term" value="P:DNA replication"/>
    <property type="evidence" value="ECO:0007669"/>
    <property type="project" value="UniProtKB-KW"/>
</dbReference>
<dbReference type="HAMAP" id="MF_04011">
    <property type="entry name" value="HSV_PRIM"/>
    <property type="match status" value="1"/>
</dbReference>
<dbReference type="InterPro" id="IPR033685">
    <property type="entry name" value="HSV_PRIM"/>
</dbReference>
<dbReference type="Pfam" id="PF03121">
    <property type="entry name" value="Herpes_UL52"/>
    <property type="match status" value="1"/>
</dbReference>
<gene>
    <name type="primary">U43</name>
</gene>
<proteinExistence type="inferred from homology"/>
<accession>P52468</accession>
<sequence>MTITVFATEYDPAHVIVNILCKNPSEHLIFPIIVKYKPSKNVYFCMQTQKCKFSKRIETVFVCDAESLNFSYYVKNALPIKSEDIIHCLNTEETENLYKDFLLSHVPEGSENIEFKSLVFFCKTIIIKHLTNKYLLPTSPFWFLSTYGQTEGMLLLTMYYYLFEEQKSTIATTKNYVQCFTDKLGDMVFTYSSMSEFINITLKSNYRKKFVSFSEYAKQKNIRDRKEFLYLDKQIDIFRNSVHLTNSFRVHYIYIAYSTALEKNKFIKYSQLTSYDPTRSDTSQCQENMYILGNSLHSDLISIMKQYFNEDSYFQNYVEIKRMLNNKFQMQQYVYDINSNRNIMLVINSDQISKMVNKCNKHGEGYFTPIKLGLQGFLKILASNKSILIDGKPVTRRQYLHDQFSNPIPMFRVQMSYKNLYCFGSAESWYKNMGFDQVMQFLPNEYISDESLTSTFWLQDTTFLSDEIEKQFYVTRHEIFNEYLPVTNYIGDLDLPLQDSAIITESLFFSMCKLMRNVLINAWQKIFPFIDKDAYPIFFFKTTCSNPENPLNHNVCYNEVETAFCVCKKKIGLRIAIPIPQGTAIIGSEPLKQLSKIFNHLMCLNHDLMQILNSVIFPGECFDTGIYNTGRCLRLGFMYKVDEENNRFLYGRLKPIFIVPEKMKKNFQDFVSMQLDLNNILHHGTKDQTITEIIYSIFDKACPTEFSFIDSRTKQLYHRKQSSLETLCLKYLHVNGFSETSCLSRDDLLMTFTRSIAWPQMLKKNIQHCEARTATQFQHVTFLKIDHKNIQLKKLQNGKLSDFSCLTRNHKGNRENVLVYLEFKVDNNRILIILWSKCFTTKCKSNSKQVHSSVVLDSLNM</sequence>
<evidence type="ECO:0000255" key="1">
    <source>
        <dbReference type="HAMAP-Rule" id="MF_04011"/>
    </source>
</evidence>
<comment type="function">
    <text evidence="1">Essential component of the helicase/primase complex. Unwinds the DNA at the replication forks and generates single-stranded DNA for both leading and lagging strand synthesis. The primase initiates primer synthesis and thereby produces large amount of short RNA primers on the lagging strand that the polymerase elongates using dNTPs.</text>
</comment>
<comment type="subunit">
    <text evidence="1">Associates with the helicase and the primase-associated factor to form the helicase-primase factor.</text>
</comment>
<comment type="subcellular location">
    <subcellularLocation>
        <location evidence="1">Host nucleus</location>
    </subcellularLocation>
    <text evidence="1">Requires the presence of the primase associated factor to properly localize in the host cell nucleus.</text>
</comment>
<comment type="similarity">
    <text evidence="1">Belongs to the herpesviridae DNA primase family.</text>
</comment>
<keyword id="KW-0235">DNA replication</keyword>
<keyword id="KW-1048">Host nucleus</keyword>
<keyword id="KW-0479">Metal-binding</keyword>
<keyword id="KW-1185">Reference proteome</keyword>
<keyword id="KW-0808">Transferase</keyword>
<keyword id="KW-0862">Zinc</keyword>
<keyword id="KW-0863">Zinc-finger</keyword>
<name>PRIM_HHV7J</name>
<reference key="1">
    <citation type="journal article" date="1996" name="J. Virol.">
        <title>Determination and analysis of the complete nucleotide sequence of human herpesvirus.</title>
        <authorList>
            <person name="Nicholas J."/>
        </authorList>
    </citation>
    <scope>NUCLEOTIDE SEQUENCE [LARGE SCALE GENOMIC DNA]</scope>
</reference>
<organism>
    <name type="scientific">Human herpesvirus 7 (strain JI)</name>
    <name type="common">HHV-7</name>
    <name type="synonym">Human T lymphotropic virus</name>
    <dbReference type="NCBI Taxonomy" id="57278"/>
    <lineage>
        <taxon>Viruses</taxon>
        <taxon>Duplodnaviria</taxon>
        <taxon>Heunggongvirae</taxon>
        <taxon>Peploviricota</taxon>
        <taxon>Herviviricetes</taxon>
        <taxon>Herpesvirales</taxon>
        <taxon>Orthoherpesviridae</taxon>
        <taxon>Betaherpesvirinae</taxon>
        <taxon>Roseolovirus</taxon>
        <taxon>Roseolovirus humanbeta7</taxon>
        <taxon>Human betaherpesvirus 7</taxon>
    </lineage>
</organism>
<protein>
    <recommendedName>
        <fullName evidence="1">DNA primase</fullName>
        <ecNumber evidence="1">2.7.7.-</ecNumber>
    </recommendedName>
</protein>
<organismHost>
    <name type="scientific">Homo sapiens</name>
    <name type="common">Human</name>
    <dbReference type="NCBI Taxonomy" id="9606"/>
</organismHost>